<evidence type="ECO:0000255" key="1">
    <source>
        <dbReference type="HAMAP-Rule" id="MF_00371"/>
    </source>
</evidence>
<evidence type="ECO:0000305" key="2"/>
<protein>
    <recommendedName>
        <fullName evidence="1">Small ribosomal subunit protein eS27</fullName>
    </recommendedName>
    <alternativeName>
        <fullName evidence="2">30S ribosomal protein S27e</fullName>
    </alternativeName>
</protein>
<feature type="chain" id="PRO_1000007137" description="Small ribosomal subunit protein eS27">
    <location>
        <begin position="1"/>
        <end position="67"/>
    </location>
</feature>
<feature type="zinc finger region" description="C4-type" evidence="1">
    <location>
        <begin position="22"/>
        <end position="44"/>
    </location>
</feature>
<feature type="binding site" evidence="1">
    <location>
        <position position="22"/>
    </location>
    <ligand>
        <name>Zn(2+)</name>
        <dbReference type="ChEBI" id="CHEBI:29105"/>
    </ligand>
</feature>
<feature type="binding site" evidence="1">
    <location>
        <position position="25"/>
    </location>
    <ligand>
        <name>Zn(2+)</name>
        <dbReference type="ChEBI" id="CHEBI:29105"/>
    </ligand>
</feature>
<feature type="binding site" evidence="1">
    <location>
        <position position="41"/>
    </location>
    <ligand>
        <name>Zn(2+)</name>
        <dbReference type="ChEBI" id="CHEBI:29105"/>
    </ligand>
</feature>
<feature type="binding site" evidence="1">
    <location>
        <position position="44"/>
    </location>
    <ligand>
        <name>Zn(2+)</name>
        <dbReference type="ChEBI" id="CHEBI:29105"/>
    </ligand>
</feature>
<dbReference type="EMBL" id="CP000561">
    <property type="protein sequence ID" value="ABO08419.1"/>
    <property type="molecule type" value="Genomic_DNA"/>
</dbReference>
<dbReference type="RefSeq" id="WP_011849677.1">
    <property type="nucleotide sequence ID" value="NC_009073.1"/>
</dbReference>
<dbReference type="PDB" id="9E71">
    <property type="method" value="EM"/>
    <property type="resolution" value="2.36 A"/>
    <property type="chains" value="BY=1-67"/>
</dbReference>
<dbReference type="PDB" id="9E7F">
    <property type="method" value="EM"/>
    <property type="resolution" value="2.53 A"/>
    <property type="chains" value="BY=1-67"/>
</dbReference>
<dbReference type="PDBsum" id="9E71"/>
<dbReference type="PDBsum" id="9E7F"/>
<dbReference type="EMDB" id="EMD-47628"/>
<dbReference type="EMDB" id="EMD-47668"/>
<dbReference type="SMR" id="A3MUV2"/>
<dbReference type="STRING" id="410359.Pcal_0994"/>
<dbReference type="GeneID" id="4909771"/>
<dbReference type="KEGG" id="pcl:Pcal_0994"/>
<dbReference type="eggNOG" id="arCOG04108">
    <property type="taxonomic scope" value="Archaea"/>
</dbReference>
<dbReference type="HOGENOM" id="CLU_199465_0_0_2"/>
<dbReference type="OrthoDB" id="5718at2157"/>
<dbReference type="Proteomes" id="UP000001431">
    <property type="component" value="Chromosome"/>
</dbReference>
<dbReference type="GO" id="GO:1990904">
    <property type="term" value="C:ribonucleoprotein complex"/>
    <property type="evidence" value="ECO:0007669"/>
    <property type="project" value="UniProtKB-KW"/>
</dbReference>
<dbReference type="GO" id="GO:0005840">
    <property type="term" value="C:ribosome"/>
    <property type="evidence" value="ECO:0007669"/>
    <property type="project" value="UniProtKB-KW"/>
</dbReference>
<dbReference type="GO" id="GO:0003735">
    <property type="term" value="F:structural constituent of ribosome"/>
    <property type="evidence" value="ECO:0007669"/>
    <property type="project" value="InterPro"/>
</dbReference>
<dbReference type="GO" id="GO:0008270">
    <property type="term" value="F:zinc ion binding"/>
    <property type="evidence" value="ECO:0007669"/>
    <property type="project" value="UniProtKB-UniRule"/>
</dbReference>
<dbReference type="GO" id="GO:0006412">
    <property type="term" value="P:translation"/>
    <property type="evidence" value="ECO:0007669"/>
    <property type="project" value="UniProtKB-UniRule"/>
</dbReference>
<dbReference type="FunFam" id="2.20.25.100:FF:000002">
    <property type="entry name" value="30S ribosomal protein S27e"/>
    <property type="match status" value="1"/>
</dbReference>
<dbReference type="Gene3D" id="2.20.25.100">
    <property type="entry name" value="Zn-binding ribosomal proteins"/>
    <property type="match status" value="1"/>
</dbReference>
<dbReference type="HAMAP" id="MF_00371">
    <property type="entry name" value="Ribosomal_eS27"/>
    <property type="match status" value="1"/>
</dbReference>
<dbReference type="InterPro" id="IPR000592">
    <property type="entry name" value="Ribosomal_eS27"/>
</dbReference>
<dbReference type="InterPro" id="IPR023407">
    <property type="entry name" value="Ribosomal_eS27_Zn-bd_dom_sf"/>
</dbReference>
<dbReference type="InterPro" id="IPR011332">
    <property type="entry name" value="Ribosomal_zn-bd"/>
</dbReference>
<dbReference type="NCBIfam" id="NF001629">
    <property type="entry name" value="PRK00415.1"/>
    <property type="match status" value="1"/>
</dbReference>
<dbReference type="PANTHER" id="PTHR11594">
    <property type="entry name" value="40S RIBOSOMAL PROTEIN S27"/>
    <property type="match status" value="1"/>
</dbReference>
<dbReference type="Pfam" id="PF01667">
    <property type="entry name" value="Ribosomal_S27e"/>
    <property type="match status" value="1"/>
</dbReference>
<dbReference type="SUPFAM" id="SSF57829">
    <property type="entry name" value="Zn-binding ribosomal proteins"/>
    <property type="match status" value="1"/>
</dbReference>
<dbReference type="PROSITE" id="PS01168">
    <property type="entry name" value="RIBOSOMAL_S27E"/>
    <property type="match status" value="1"/>
</dbReference>
<keyword id="KW-0002">3D-structure</keyword>
<keyword id="KW-0479">Metal-binding</keyword>
<keyword id="KW-0687">Ribonucleoprotein</keyword>
<keyword id="KW-0689">Ribosomal protein</keyword>
<keyword id="KW-0862">Zinc</keyword>
<keyword id="KW-0863">Zinc-finger</keyword>
<gene>
    <name evidence="1" type="primary">rps27e</name>
    <name type="ordered locus">Pcal_0994</name>
</gene>
<sequence>MPQRFSRVLIPQPRSRFVRLRCPDCGNEQVTFSHAAMVVRCLVCGRVLAQPTGGKAIFAGHVVKVLE</sequence>
<proteinExistence type="evidence at protein level"/>
<comment type="cofactor">
    <cofactor evidence="1">
        <name>Zn(2+)</name>
        <dbReference type="ChEBI" id="CHEBI:29105"/>
    </cofactor>
    <text evidence="1">Binds 1 zinc ion per subunit.</text>
</comment>
<comment type="subunit">
    <text evidence="1">Part of the 30S ribosomal subunit.</text>
</comment>
<comment type="similarity">
    <text evidence="1">Belongs to the eukaryotic ribosomal protein eS27 family.</text>
</comment>
<reference key="1">
    <citation type="submission" date="2007-02" db="EMBL/GenBank/DDBJ databases">
        <title>Complete sequence of Pyrobaculum calidifontis JCM 11548.</title>
        <authorList>
            <consortium name="US DOE Joint Genome Institute"/>
            <person name="Copeland A."/>
            <person name="Lucas S."/>
            <person name="Lapidus A."/>
            <person name="Barry K."/>
            <person name="Glavina del Rio T."/>
            <person name="Dalin E."/>
            <person name="Tice H."/>
            <person name="Pitluck S."/>
            <person name="Chain P."/>
            <person name="Malfatti S."/>
            <person name="Shin M."/>
            <person name="Vergez L."/>
            <person name="Schmutz J."/>
            <person name="Larimer F."/>
            <person name="Land M."/>
            <person name="Hauser L."/>
            <person name="Kyrpides N."/>
            <person name="Mikhailova N."/>
            <person name="Cozen A.E."/>
            <person name="Fitz-Gibbon S.T."/>
            <person name="House C.H."/>
            <person name="Saltikov C."/>
            <person name="Lowe T.M."/>
            <person name="Richardson P."/>
        </authorList>
    </citation>
    <scope>NUCLEOTIDE SEQUENCE [LARGE SCALE GENOMIC DNA]</scope>
    <source>
        <strain>DSM 21063 / JCM 11548 / VA1</strain>
    </source>
</reference>
<name>RS27_PYRCJ</name>
<organism>
    <name type="scientific">Pyrobaculum calidifontis (strain DSM 21063 / JCM 11548 / VA1)</name>
    <dbReference type="NCBI Taxonomy" id="410359"/>
    <lineage>
        <taxon>Archaea</taxon>
        <taxon>Thermoproteota</taxon>
        <taxon>Thermoprotei</taxon>
        <taxon>Thermoproteales</taxon>
        <taxon>Thermoproteaceae</taxon>
        <taxon>Pyrobaculum</taxon>
    </lineage>
</organism>
<accession>A3MUV2</accession>